<name>CB23_TOBAC</name>
<gene>
    <name type="primary">CAB36</name>
</gene>
<proteinExistence type="inferred from homology"/>
<comment type="function">
    <text>The light-harvesting complex (LHC) functions as a light receptor, it captures and delivers excitation energy to photosystems with which it is closely associated.</text>
</comment>
<comment type="cofactor">
    <text evidence="1">Binds at least 14 chlorophylls (8 Chl-a and 6 Chl-b) and carotenoids such as lutein and neoxanthin.</text>
</comment>
<comment type="subunit">
    <text>The LHC complex consists of chlorophyll a-b binding proteins.</text>
</comment>
<comment type="subcellular location">
    <subcellularLocation>
        <location>Plastid</location>
        <location>Chloroplast thylakoid membrane</location>
        <topology>Multi-pass membrane protein</topology>
    </subcellularLocation>
</comment>
<comment type="domain">
    <text>The N-terminus of the protein extends into the stroma where it is involved with adhesion of granal membranes and post-translational modifications; both are believed to mediate the distribution of excitation energy between photosystems I and II.</text>
</comment>
<comment type="PTM">
    <text evidence="1">Photoregulated by reversible phosphorylation of its threonine residues.</text>
</comment>
<comment type="similarity">
    <text evidence="5">Belongs to the light-harvesting chlorophyll a/b-binding (LHC) protein family.</text>
</comment>
<organism>
    <name type="scientific">Nicotiana tabacum</name>
    <name type="common">Common tobacco</name>
    <dbReference type="NCBI Taxonomy" id="4097"/>
    <lineage>
        <taxon>Eukaryota</taxon>
        <taxon>Viridiplantae</taxon>
        <taxon>Streptophyta</taxon>
        <taxon>Embryophyta</taxon>
        <taxon>Tracheophyta</taxon>
        <taxon>Spermatophyta</taxon>
        <taxon>Magnoliopsida</taxon>
        <taxon>eudicotyledons</taxon>
        <taxon>Gunneridae</taxon>
        <taxon>Pentapetalae</taxon>
        <taxon>asterids</taxon>
        <taxon>lamiids</taxon>
        <taxon>Solanales</taxon>
        <taxon>Solanaceae</taxon>
        <taxon>Nicotianoideae</taxon>
        <taxon>Nicotianeae</taxon>
        <taxon>Nicotiana</taxon>
    </lineage>
</organism>
<feature type="transit peptide" description="Chloroplast" evidence="1">
    <location>
        <begin position="1"/>
        <end position="37"/>
    </location>
</feature>
<feature type="chain" id="PRO_0000003704" description="Chlorophyll a-b binding protein 36, chloroplastic">
    <location>
        <begin position="38"/>
        <end position="265"/>
    </location>
</feature>
<feature type="transmembrane region" description="Helical" evidence="4">
    <location>
        <begin position="99"/>
        <end position="119"/>
    </location>
</feature>
<feature type="transmembrane region" description="Helical" evidence="4">
    <location>
        <begin position="151"/>
        <end position="171"/>
    </location>
</feature>
<feature type="transmembrane region" description="Helical" evidence="4">
    <location>
        <begin position="219"/>
        <end position="239"/>
    </location>
</feature>
<feature type="binding site" description="axial binding residue" evidence="3">
    <location>
        <position position="57"/>
    </location>
    <ligand>
        <name>chlorophyll b</name>
        <dbReference type="ChEBI" id="CHEBI:61721"/>
        <label>1</label>
    </ligand>
    <ligandPart>
        <name>Mg</name>
        <dbReference type="ChEBI" id="CHEBI:25107"/>
    </ligandPart>
</feature>
<feature type="binding site" evidence="1">
    <location>
        <position position="79"/>
    </location>
    <ligand>
        <name>chlorophyll a</name>
        <dbReference type="ChEBI" id="CHEBI:58416"/>
        <label>1</label>
    </ligand>
</feature>
<feature type="binding site" evidence="1">
    <location>
        <position position="85"/>
    </location>
    <ligand>
        <name>chlorophyll a</name>
        <dbReference type="ChEBI" id="CHEBI:58416"/>
        <label>1</label>
    </ligand>
</feature>
<feature type="binding site" description="axial binding residue" evidence="3">
    <location>
        <position position="98"/>
    </location>
    <ligand>
        <name>chlorophyll a</name>
        <dbReference type="ChEBI" id="CHEBI:58416"/>
        <label>1</label>
    </ligand>
    <ligandPart>
        <name>Mg</name>
        <dbReference type="ChEBI" id="CHEBI:25107"/>
    </ligandPart>
</feature>
<feature type="binding site" description="axial binding residue" evidence="3">
    <location>
        <position position="101"/>
    </location>
    <ligand>
        <name>chlorophyll a</name>
        <dbReference type="ChEBI" id="CHEBI:58416"/>
        <label>2</label>
    </ligand>
    <ligandPart>
        <name>Mg</name>
        <dbReference type="ChEBI" id="CHEBI:25107"/>
    </ligandPart>
</feature>
<feature type="binding site" evidence="1">
    <location>
        <position position="103"/>
    </location>
    <ligand>
        <name>chlorophyll b</name>
        <dbReference type="ChEBI" id="CHEBI:61721"/>
        <label>2</label>
    </ligand>
</feature>
<feature type="binding site" evidence="1">
    <location>
        <position position="136"/>
    </location>
    <ligand>
        <name>chlorophyll a</name>
        <dbReference type="ChEBI" id="CHEBI:58416"/>
        <label>3</label>
    </ligand>
</feature>
<feature type="binding site" evidence="1">
    <location>
        <position position="146"/>
    </location>
    <ligand>
        <name>chlorophyll a</name>
        <dbReference type="ChEBI" id="CHEBI:58416"/>
        <label>3</label>
    </ligand>
</feature>
<feature type="binding site" description="axial binding residue" evidence="1">
    <location>
        <position position="152"/>
    </location>
    <ligand>
        <name>chlorophyll b</name>
        <dbReference type="ChEBI" id="CHEBI:61721"/>
        <label>2</label>
    </ligand>
    <ligandPart>
        <name>Mg</name>
        <dbReference type="ChEBI" id="CHEBI:25107"/>
    </ligandPart>
</feature>
<feature type="binding site" evidence="1">
    <location>
        <position position="156"/>
    </location>
    <ligand>
        <name>chlorophyll b</name>
        <dbReference type="ChEBI" id="CHEBI:61721"/>
        <label>3</label>
    </ligand>
</feature>
<feature type="binding site" evidence="1">
    <location>
        <position position="164"/>
    </location>
    <ligand>
        <name>chlorophyll b</name>
        <dbReference type="ChEBI" id="CHEBI:61721"/>
        <label>4</label>
    </ligand>
</feature>
<feature type="binding site" evidence="2">
    <location>
        <position position="164"/>
    </location>
    <ligand>
        <name>chlorophyll b</name>
        <dbReference type="ChEBI" id="CHEBI:61721"/>
        <label>5</label>
    </ligand>
</feature>
<feature type="binding site" description="axial binding residue" evidence="3">
    <location>
        <position position="172"/>
    </location>
    <ligand>
        <name>chlorophyll b</name>
        <dbReference type="ChEBI" id="CHEBI:61721"/>
        <label>3</label>
    </ligand>
    <ligandPart>
        <name>Mg</name>
        <dbReference type="ChEBI" id="CHEBI:25107"/>
    </ligandPart>
</feature>
<feature type="binding site" evidence="1">
    <location>
        <position position="175"/>
    </location>
    <ligand>
        <name>chlorophyll b</name>
        <dbReference type="ChEBI" id="CHEBI:61721"/>
        <label>4</label>
    </ligand>
</feature>
<feature type="binding site" evidence="1">
    <location>
        <position position="181"/>
    </location>
    <ligand>
        <name>chlorophyll b</name>
        <dbReference type="ChEBI" id="CHEBI:61721"/>
        <label>2</label>
    </ligand>
</feature>
<feature type="binding site" evidence="1">
    <location>
        <position position="212"/>
    </location>
    <ligand>
        <name>chlorophyll a</name>
        <dbReference type="ChEBI" id="CHEBI:58416"/>
        <label>5</label>
    </ligand>
</feature>
<feature type="binding site" description="axial binding residue" evidence="3">
    <location>
        <position position="213"/>
    </location>
    <ligand>
        <name>chlorophyll a</name>
        <dbReference type="ChEBI" id="CHEBI:58416"/>
        <label>3</label>
    </ligand>
    <ligandPart>
        <name>Mg</name>
        <dbReference type="ChEBI" id="CHEBI:25107"/>
    </ligandPart>
</feature>
<feature type="binding site" description="axial binding residue" evidence="3">
    <location>
        <position position="216"/>
    </location>
    <ligand>
        <name>chlorophyll a</name>
        <dbReference type="ChEBI" id="CHEBI:58416"/>
        <label>4</label>
    </ligand>
    <ligandPart>
        <name>Mg</name>
        <dbReference type="ChEBI" id="CHEBI:25107"/>
    </ligandPart>
</feature>
<feature type="binding site" evidence="1">
    <location>
        <position position="218"/>
    </location>
    <ligand>
        <name>chlorophyll a</name>
        <dbReference type="ChEBI" id="CHEBI:58416"/>
        <label>1</label>
    </ligand>
</feature>
<feature type="binding site" description="axial binding residue" evidence="3">
    <location>
        <position position="230"/>
    </location>
    <ligand>
        <name>chlorophyll a</name>
        <dbReference type="ChEBI" id="CHEBI:58416"/>
        <label>5</label>
    </ligand>
    <ligandPart>
        <name>Mg</name>
        <dbReference type="ChEBI" id="CHEBI:25107"/>
    </ligandPart>
</feature>
<feature type="binding site" description="axial binding residue" evidence="3">
    <location>
        <position position="245"/>
    </location>
    <ligand>
        <name>chlorophyll a</name>
        <dbReference type="ChEBI" id="CHEBI:58416"/>
        <label>6</label>
    </ligand>
    <ligandPart>
        <name>Mg</name>
        <dbReference type="ChEBI" id="CHEBI:25107"/>
    </ligandPart>
</feature>
<feature type="binding site" evidence="1">
    <location>
        <position position="254"/>
    </location>
    <ligand>
        <name>chlorophyll a</name>
        <dbReference type="ChEBI" id="CHEBI:58416"/>
        <label>6</label>
    </ligand>
</feature>
<feature type="binding site" evidence="1">
    <location>
        <position position="261"/>
    </location>
    <ligand>
        <name>chlorophyll b</name>
        <dbReference type="ChEBI" id="CHEBI:61721"/>
        <label>5</label>
    </ligand>
</feature>
<feature type="modified residue" description="N2-acetylarginine" evidence="1">
    <location>
        <position position="38"/>
    </location>
</feature>
<feature type="modified residue" description="Phosphothreonine" evidence="1">
    <location>
        <position position="40"/>
    </location>
</feature>
<reference key="1">
    <citation type="submission" date="1991-03" db="EMBL/GenBank/DDBJ databases">
        <authorList>
            <person name="Kavanagh T.A."/>
            <person name="Bevan M.W."/>
        </authorList>
    </citation>
    <scope>NUCLEOTIDE SEQUENCE [GENOMIC DNA]</scope>
    <source>
        <strain>cv. Havana</strain>
    </source>
</reference>
<sequence>MATSAIEQSAFAGQTALKSQNELVRKIGSFNGGRATMRRTVKSAPQSIWYGEDRPKYLGPFSEQTPSYLTGEFPGDYGWDTAGLSADPETFARNRELEVIHCRWAMLGALGCVFPEILSKNGVKFGEAVWFKAGSQIFSEGGLDYLGNPNLIHAQSILAVWASQVVLMGLIEGYRVGGGPLGEGLDKIYPGGAFDPLGLADDPEAFAELKVKEIKNGRLAMFSMFGFFVQAIVTGKGPIENLFDHVADPVANNAWAYATNFVPGK</sequence>
<protein>
    <recommendedName>
        <fullName>Chlorophyll a-b binding protein 36, chloroplastic</fullName>
    </recommendedName>
    <alternativeName>
        <fullName>LHCII type I CAB-36</fullName>
        <shortName>LHCP</shortName>
    </alternativeName>
</protein>
<accession>P27494</accession>
<evidence type="ECO:0000250" key="1"/>
<evidence type="ECO:0000250" key="2">
    <source>
        <dbReference type="UniProtKB" id="P07371"/>
    </source>
</evidence>
<evidence type="ECO:0000250" key="3">
    <source>
        <dbReference type="UniProtKB" id="P12333"/>
    </source>
</evidence>
<evidence type="ECO:0000255" key="4"/>
<evidence type="ECO:0000305" key="5"/>
<dbReference type="EMBL" id="X58230">
    <property type="protein sequence ID" value="CAA41188.1"/>
    <property type="molecule type" value="Genomic_DNA"/>
</dbReference>
<dbReference type="PIR" id="S21827">
    <property type="entry name" value="S21827"/>
</dbReference>
<dbReference type="SMR" id="P27494"/>
<dbReference type="STRING" id="4097.P27494"/>
<dbReference type="PaxDb" id="4097-P27494"/>
<dbReference type="Proteomes" id="UP000084051">
    <property type="component" value="Unplaced"/>
</dbReference>
<dbReference type="GO" id="GO:0009535">
    <property type="term" value="C:chloroplast thylakoid membrane"/>
    <property type="evidence" value="ECO:0000318"/>
    <property type="project" value="GO_Central"/>
</dbReference>
<dbReference type="GO" id="GO:0009522">
    <property type="term" value="C:photosystem I"/>
    <property type="evidence" value="ECO:0007669"/>
    <property type="project" value="UniProtKB-KW"/>
</dbReference>
<dbReference type="GO" id="GO:0009523">
    <property type="term" value="C:photosystem II"/>
    <property type="evidence" value="ECO:0007669"/>
    <property type="project" value="UniProtKB-KW"/>
</dbReference>
<dbReference type="GO" id="GO:0016168">
    <property type="term" value="F:chlorophyll binding"/>
    <property type="evidence" value="ECO:0007669"/>
    <property type="project" value="UniProtKB-KW"/>
</dbReference>
<dbReference type="GO" id="GO:0046872">
    <property type="term" value="F:metal ion binding"/>
    <property type="evidence" value="ECO:0007669"/>
    <property type="project" value="UniProtKB-KW"/>
</dbReference>
<dbReference type="GO" id="GO:0009768">
    <property type="term" value="P:photosynthesis, light harvesting in photosystem I"/>
    <property type="evidence" value="ECO:0000318"/>
    <property type="project" value="GO_Central"/>
</dbReference>
<dbReference type="GO" id="GO:0009416">
    <property type="term" value="P:response to light stimulus"/>
    <property type="evidence" value="ECO:0000318"/>
    <property type="project" value="GO_Central"/>
</dbReference>
<dbReference type="FunFam" id="1.10.3460.10:FF:000001">
    <property type="entry name" value="Chlorophyll a-b binding protein, chloroplastic"/>
    <property type="match status" value="1"/>
</dbReference>
<dbReference type="Gene3D" id="1.10.3460.10">
    <property type="entry name" value="Chlorophyll a/b binding protein domain"/>
    <property type="match status" value="1"/>
</dbReference>
<dbReference type="InterPro" id="IPR001344">
    <property type="entry name" value="Chloro_AB-bd_pln"/>
</dbReference>
<dbReference type="InterPro" id="IPR022796">
    <property type="entry name" value="Chloroa_b-bind"/>
</dbReference>
<dbReference type="PANTHER" id="PTHR21649">
    <property type="entry name" value="CHLOROPHYLL A/B BINDING PROTEIN"/>
    <property type="match status" value="1"/>
</dbReference>
<dbReference type="Pfam" id="PF00504">
    <property type="entry name" value="Chloroa_b-bind"/>
    <property type="match status" value="1"/>
</dbReference>
<dbReference type="SUPFAM" id="SSF103511">
    <property type="entry name" value="Chlorophyll a-b binding protein"/>
    <property type="match status" value="1"/>
</dbReference>
<keyword id="KW-0007">Acetylation</keyword>
<keyword id="KW-0148">Chlorophyll</keyword>
<keyword id="KW-0150">Chloroplast</keyword>
<keyword id="KW-0157">Chromophore</keyword>
<keyword id="KW-0460">Magnesium</keyword>
<keyword id="KW-0472">Membrane</keyword>
<keyword id="KW-0479">Metal-binding</keyword>
<keyword id="KW-0597">Phosphoprotein</keyword>
<keyword id="KW-0602">Photosynthesis</keyword>
<keyword id="KW-0603">Photosystem I</keyword>
<keyword id="KW-0604">Photosystem II</keyword>
<keyword id="KW-0934">Plastid</keyword>
<keyword id="KW-1185">Reference proteome</keyword>
<keyword id="KW-0793">Thylakoid</keyword>
<keyword id="KW-0809">Transit peptide</keyword>
<keyword id="KW-0812">Transmembrane</keyword>
<keyword id="KW-1133">Transmembrane helix</keyword>